<evidence type="ECO:0000255" key="1">
    <source>
        <dbReference type="HAMAP-Rule" id="MF_01031"/>
    </source>
</evidence>
<proteinExistence type="inferred from homology"/>
<gene>
    <name evidence="1" type="primary">leuD</name>
    <name type="ordered locus">SAV2060</name>
</gene>
<keyword id="KW-0028">Amino-acid biosynthesis</keyword>
<keyword id="KW-0100">Branched-chain amino acid biosynthesis</keyword>
<keyword id="KW-0432">Leucine biosynthesis</keyword>
<keyword id="KW-0456">Lyase</keyword>
<protein>
    <recommendedName>
        <fullName evidence="1">3-isopropylmalate dehydratase small subunit</fullName>
        <ecNumber evidence="1">4.2.1.33</ecNumber>
    </recommendedName>
    <alternativeName>
        <fullName evidence="1">Alpha-IPM isomerase</fullName>
        <shortName evidence="1">IPMI</shortName>
    </alternativeName>
    <alternativeName>
        <fullName evidence="1">Isopropylmalate isomerase</fullName>
    </alternativeName>
</protein>
<organism>
    <name type="scientific">Staphylococcus aureus (strain Mu50 / ATCC 700699)</name>
    <dbReference type="NCBI Taxonomy" id="158878"/>
    <lineage>
        <taxon>Bacteria</taxon>
        <taxon>Bacillati</taxon>
        <taxon>Bacillota</taxon>
        <taxon>Bacilli</taxon>
        <taxon>Bacillales</taxon>
        <taxon>Staphylococcaceae</taxon>
        <taxon>Staphylococcus</taxon>
    </lineage>
</organism>
<comment type="function">
    <text evidence="1">Catalyzes the isomerization between 2-isopropylmalate and 3-isopropylmalate, via the formation of 2-isopropylmaleate.</text>
</comment>
<comment type="catalytic activity">
    <reaction evidence="1">
        <text>(2R,3S)-3-isopropylmalate = (2S)-2-isopropylmalate</text>
        <dbReference type="Rhea" id="RHEA:32287"/>
        <dbReference type="ChEBI" id="CHEBI:1178"/>
        <dbReference type="ChEBI" id="CHEBI:35121"/>
        <dbReference type="EC" id="4.2.1.33"/>
    </reaction>
</comment>
<comment type="pathway">
    <text evidence="1">Amino-acid biosynthesis; L-leucine biosynthesis; L-leucine from 3-methyl-2-oxobutanoate: step 2/4.</text>
</comment>
<comment type="subunit">
    <text evidence="1">Heterodimer of LeuC and LeuD.</text>
</comment>
<comment type="similarity">
    <text evidence="1">Belongs to the LeuD family. LeuD type 1 subfamily.</text>
</comment>
<sequence>MAAIKPITTYKGKIVPLFNDNIDTDQIIPKVHLKRISKSGFGPFAFDEWRYLPDGSDNPDFNPNKPQYKGASILITGDNFGCGSSREHAAWALKDYGFHIIIAGSFSDIFYMNCTKNAMLPIVLEKSAREHLAQYEEIEIDLPNQTVSSPDKRFHFEIDETWKNKLVNGLDDIAITLQYESLIEKYEKSL</sequence>
<accession>P65279</accession>
<accession>Q99SJ2</accession>
<reference key="1">
    <citation type="journal article" date="2001" name="Lancet">
        <title>Whole genome sequencing of meticillin-resistant Staphylococcus aureus.</title>
        <authorList>
            <person name="Kuroda M."/>
            <person name="Ohta T."/>
            <person name="Uchiyama I."/>
            <person name="Baba T."/>
            <person name="Yuzawa H."/>
            <person name="Kobayashi I."/>
            <person name="Cui L."/>
            <person name="Oguchi A."/>
            <person name="Aoki K."/>
            <person name="Nagai Y."/>
            <person name="Lian J.-Q."/>
            <person name="Ito T."/>
            <person name="Kanamori M."/>
            <person name="Matsumaru H."/>
            <person name="Maruyama A."/>
            <person name="Murakami H."/>
            <person name="Hosoyama A."/>
            <person name="Mizutani-Ui Y."/>
            <person name="Takahashi N.K."/>
            <person name="Sawano T."/>
            <person name="Inoue R."/>
            <person name="Kaito C."/>
            <person name="Sekimizu K."/>
            <person name="Hirakawa H."/>
            <person name="Kuhara S."/>
            <person name="Goto S."/>
            <person name="Yabuzaki J."/>
            <person name="Kanehisa M."/>
            <person name="Yamashita A."/>
            <person name="Oshima K."/>
            <person name="Furuya K."/>
            <person name="Yoshino C."/>
            <person name="Shiba T."/>
            <person name="Hattori M."/>
            <person name="Ogasawara N."/>
            <person name="Hayashi H."/>
            <person name="Hiramatsu K."/>
        </authorList>
    </citation>
    <scope>NUCLEOTIDE SEQUENCE [LARGE SCALE GENOMIC DNA]</scope>
    <source>
        <strain>Mu50 / ATCC 700699</strain>
    </source>
</reference>
<feature type="chain" id="PRO_0000141886" description="3-isopropylmalate dehydratase small subunit">
    <location>
        <begin position="1"/>
        <end position="190"/>
    </location>
</feature>
<name>LEUD_STAAM</name>
<dbReference type="EC" id="4.2.1.33" evidence="1"/>
<dbReference type="EMBL" id="BA000017">
    <property type="protein sequence ID" value="BAB58222.1"/>
    <property type="molecule type" value="Genomic_DNA"/>
</dbReference>
<dbReference type="RefSeq" id="WP_000718953.1">
    <property type="nucleotide sequence ID" value="NC_002758.2"/>
</dbReference>
<dbReference type="SMR" id="P65279"/>
<dbReference type="KEGG" id="sav:SAV2060"/>
<dbReference type="HOGENOM" id="CLU_081378_0_3_9"/>
<dbReference type="PhylomeDB" id="P65279"/>
<dbReference type="UniPathway" id="UPA00048">
    <property type="reaction ID" value="UER00071"/>
</dbReference>
<dbReference type="Proteomes" id="UP000002481">
    <property type="component" value="Chromosome"/>
</dbReference>
<dbReference type="GO" id="GO:0009316">
    <property type="term" value="C:3-isopropylmalate dehydratase complex"/>
    <property type="evidence" value="ECO:0007669"/>
    <property type="project" value="InterPro"/>
</dbReference>
<dbReference type="GO" id="GO:0003861">
    <property type="term" value="F:3-isopropylmalate dehydratase activity"/>
    <property type="evidence" value="ECO:0007669"/>
    <property type="project" value="UniProtKB-UniRule"/>
</dbReference>
<dbReference type="GO" id="GO:0009098">
    <property type="term" value="P:L-leucine biosynthetic process"/>
    <property type="evidence" value="ECO:0007669"/>
    <property type="project" value="UniProtKB-UniRule"/>
</dbReference>
<dbReference type="CDD" id="cd01577">
    <property type="entry name" value="IPMI_Swivel"/>
    <property type="match status" value="1"/>
</dbReference>
<dbReference type="FunFam" id="3.20.19.10:FF:000003">
    <property type="entry name" value="3-isopropylmalate dehydratase small subunit"/>
    <property type="match status" value="1"/>
</dbReference>
<dbReference type="Gene3D" id="3.20.19.10">
    <property type="entry name" value="Aconitase, domain 4"/>
    <property type="match status" value="1"/>
</dbReference>
<dbReference type="HAMAP" id="MF_01031">
    <property type="entry name" value="LeuD_type1"/>
    <property type="match status" value="1"/>
</dbReference>
<dbReference type="InterPro" id="IPR004431">
    <property type="entry name" value="3-IsopropMal_deHydase_ssu"/>
</dbReference>
<dbReference type="InterPro" id="IPR015928">
    <property type="entry name" value="Aconitase/3IPM_dehydase_swvl"/>
</dbReference>
<dbReference type="InterPro" id="IPR000573">
    <property type="entry name" value="AconitaseA/IPMdHydase_ssu_swvl"/>
</dbReference>
<dbReference type="InterPro" id="IPR033940">
    <property type="entry name" value="IPMI_Swivel"/>
</dbReference>
<dbReference type="InterPro" id="IPR050075">
    <property type="entry name" value="LeuD"/>
</dbReference>
<dbReference type="NCBIfam" id="TIGR00171">
    <property type="entry name" value="leuD"/>
    <property type="match status" value="1"/>
</dbReference>
<dbReference type="NCBIfam" id="NF002458">
    <property type="entry name" value="PRK01641.1"/>
    <property type="match status" value="1"/>
</dbReference>
<dbReference type="PANTHER" id="PTHR43345:SF5">
    <property type="entry name" value="3-ISOPROPYLMALATE DEHYDRATASE SMALL SUBUNIT"/>
    <property type="match status" value="1"/>
</dbReference>
<dbReference type="PANTHER" id="PTHR43345">
    <property type="entry name" value="3-ISOPROPYLMALATE DEHYDRATASE SMALL SUBUNIT 2-RELATED-RELATED"/>
    <property type="match status" value="1"/>
</dbReference>
<dbReference type="Pfam" id="PF00694">
    <property type="entry name" value="Aconitase_C"/>
    <property type="match status" value="1"/>
</dbReference>
<dbReference type="SUPFAM" id="SSF52016">
    <property type="entry name" value="LeuD/IlvD-like"/>
    <property type="match status" value="1"/>
</dbReference>